<organism>
    <name type="scientific">Shewanella baltica (strain OS223)</name>
    <dbReference type="NCBI Taxonomy" id="407976"/>
    <lineage>
        <taxon>Bacteria</taxon>
        <taxon>Pseudomonadati</taxon>
        <taxon>Pseudomonadota</taxon>
        <taxon>Gammaproteobacteria</taxon>
        <taxon>Alteromonadales</taxon>
        <taxon>Shewanellaceae</taxon>
        <taxon>Shewanella</taxon>
    </lineage>
</organism>
<reference key="1">
    <citation type="submission" date="2008-12" db="EMBL/GenBank/DDBJ databases">
        <title>Complete sequence of chromosome of Shewanella baltica OS223.</title>
        <authorList>
            <consortium name="US DOE Joint Genome Institute"/>
            <person name="Lucas S."/>
            <person name="Copeland A."/>
            <person name="Lapidus A."/>
            <person name="Glavina del Rio T."/>
            <person name="Dalin E."/>
            <person name="Tice H."/>
            <person name="Bruce D."/>
            <person name="Goodwin L."/>
            <person name="Pitluck S."/>
            <person name="Chertkov O."/>
            <person name="Meincke L."/>
            <person name="Brettin T."/>
            <person name="Detter J.C."/>
            <person name="Han C."/>
            <person name="Kuske C.R."/>
            <person name="Larimer F."/>
            <person name="Land M."/>
            <person name="Hauser L."/>
            <person name="Kyrpides N."/>
            <person name="Ovchinnikova G."/>
            <person name="Brettar I."/>
            <person name="Rodrigues J."/>
            <person name="Konstantinidis K."/>
            <person name="Tiedje J."/>
        </authorList>
    </citation>
    <scope>NUCLEOTIDE SEQUENCE [LARGE SCALE GENOMIC DNA]</scope>
    <source>
        <strain>OS223</strain>
    </source>
</reference>
<sequence>MSAAIVNAVKQCGYFNQGQCLSCRHIQQPLAQQVAVKTQTLLQLLAPFIPANSAELFLPPITGDDSGFRNKAKMVVLGAAHEPVLGIVSPSGEAVDLCDCLLYPADMQALLHRLTRFVQQAGLPPYRVDKAKGELKFILLTRSQVRGEYLLRFVLRSHNGIERIERELPALLAEYPQIKVVSVNIQPVHMAILEGDEEIFLTENTRLEERFNHVPLFIRPKSFFQTNPQVAAQLYQTAREWVAEFSPRSLWDLFCGVGGFGLHCASKDITLTGIEIEAEAIACAQMSAQMMGLENVQFMALDSTDFAKGKSAADKPDLIIVNPPRRGIGEALCQSLSEFAPKAILYSSCNPKTLAKDLEHIQGYHLTKVQLFDLFPHTDHFEVLAMLVKD</sequence>
<proteinExistence type="inferred from homology"/>
<keyword id="KW-0004">4Fe-4S</keyword>
<keyword id="KW-0408">Iron</keyword>
<keyword id="KW-0411">Iron-sulfur</keyword>
<keyword id="KW-0479">Metal-binding</keyword>
<keyword id="KW-0489">Methyltransferase</keyword>
<keyword id="KW-0698">rRNA processing</keyword>
<keyword id="KW-0949">S-adenosyl-L-methionine</keyword>
<keyword id="KW-0808">Transferase</keyword>
<dbReference type="EC" id="2.1.1.189" evidence="1"/>
<dbReference type="EMBL" id="CP001252">
    <property type="protein sequence ID" value="ACK47908.1"/>
    <property type="molecule type" value="Genomic_DNA"/>
</dbReference>
<dbReference type="RefSeq" id="WP_006083989.1">
    <property type="nucleotide sequence ID" value="NC_011663.1"/>
</dbReference>
<dbReference type="SMR" id="B8E5Q5"/>
<dbReference type="GeneID" id="11773650"/>
<dbReference type="KEGG" id="sbp:Sbal223_3424"/>
<dbReference type="HOGENOM" id="CLU_014689_0_0_6"/>
<dbReference type="Proteomes" id="UP000002507">
    <property type="component" value="Chromosome"/>
</dbReference>
<dbReference type="GO" id="GO:0051539">
    <property type="term" value="F:4 iron, 4 sulfur cluster binding"/>
    <property type="evidence" value="ECO:0007669"/>
    <property type="project" value="UniProtKB-KW"/>
</dbReference>
<dbReference type="GO" id="GO:0005506">
    <property type="term" value="F:iron ion binding"/>
    <property type="evidence" value="ECO:0007669"/>
    <property type="project" value="UniProtKB-UniRule"/>
</dbReference>
<dbReference type="GO" id="GO:0070041">
    <property type="term" value="F:rRNA (uridine-C5-)-methyltransferase activity"/>
    <property type="evidence" value="ECO:0007669"/>
    <property type="project" value="UniProtKB-UniRule"/>
</dbReference>
<dbReference type="GO" id="GO:0070475">
    <property type="term" value="P:rRNA base methylation"/>
    <property type="evidence" value="ECO:0007669"/>
    <property type="project" value="TreeGrafter"/>
</dbReference>
<dbReference type="CDD" id="cd02440">
    <property type="entry name" value="AdoMet_MTases"/>
    <property type="match status" value="1"/>
</dbReference>
<dbReference type="Gene3D" id="2.40.50.1070">
    <property type="match status" value="1"/>
</dbReference>
<dbReference type="Gene3D" id="3.40.50.150">
    <property type="entry name" value="Vaccinia Virus protein VP39"/>
    <property type="match status" value="1"/>
</dbReference>
<dbReference type="HAMAP" id="MF_01012">
    <property type="entry name" value="23SrRNA_methyltr_RlmC"/>
    <property type="match status" value="1"/>
</dbReference>
<dbReference type="InterPro" id="IPR011825">
    <property type="entry name" value="23SrRNA_MeTrfase_RlmC"/>
</dbReference>
<dbReference type="InterPro" id="IPR030390">
    <property type="entry name" value="MeTrfase_TrmA_AS"/>
</dbReference>
<dbReference type="InterPro" id="IPR030391">
    <property type="entry name" value="MeTrfase_TrmA_CS"/>
</dbReference>
<dbReference type="InterPro" id="IPR029063">
    <property type="entry name" value="SAM-dependent_MTases_sf"/>
</dbReference>
<dbReference type="InterPro" id="IPR010280">
    <property type="entry name" value="U5_MeTrfase_fam"/>
</dbReference>
<dbReference type="NCBIfam" id="TIGR02085">
    <property type="entry name" value="meth_trns_rumB"/>
    <property type="match status" value="1"/>
</dbReference>
<dbReference type="NCBIfam" id="TIGR00479">
    <property type="entry name" value="rumA"/>
    <property type="match status" value="1"/>
</dbReference>
<dbReference type="PANTHER" id="PTHR11061">
    <property type="entry name" value="RNA M5U METHYLTRANSFERASE"/>
    <property type="match status" value="1"/>
</dbReference>
<dbReference type="PANTHER" id="PTHR11061:SF30">
    <property type="entry name" value="TRNA (URACIL(54)-C(5))-METHYLTRANSFERASE"/>
    <property type="match status" value="1"/>
</dbReference>
<dbReference type="Pfam" id="PF05958">
    <property type="entry name" value="tRNA_U5-meth_tr"/>
    <property type="match status" value="1"/>
</dbReference>
<dbReference type="SUPFAM" id="SSF53335">
    <property type="entry name" value="S-adenosyl-L-methionine-dependent methyltransferases"/>
    <property type="match status" value="1"/>
</dbReference>
<dbReference type="PROSITE" id="PS51687">
    <property type="entry name" value="SAM_MT_RNA_M5U"/>
    <property type="match status" value="1"/>
</dbReference>
<dbReference type="PROSITE" id="PS01230">
    <property type="entry name" value="TRMA_1"/>
    <property type="match status" value="1"/>
</dbReference>
<dbReference type="PROSITE" id="PS01231">
    <property type="entry name" value="TRMA_2"/>
    <property type="match status" value="1"/>
</dbReference>
<gene>
    <name evidence="1" type="primary">rlmC</name>
    <name type="synonym">rumB</name>
    <name type="ordered locus">Sbal223_3424</name>
</gene>
<feature type="chain" id="PRO_1000148897" description="23S rRNA (uracil(747)-C(5))-methyltransferase RlmC">
    <location>
        <begin position="1"/>
        <end position="390"/>
    </location>
</feature>
<feature type="active site" description="Nucleophile" evidence="1">
    <location>
        <position position="349"/>
    </location>
</feature>
<feature type="binding site" evidence="1">
    <location>
        <position position="12"/>
    </location>
    <ligand>
        <name>[4Fe-4S] cluster</name>
        <dbReference type="ChEBI" id="CHEBI:49883"/>
    </ligand>
</feature>
<feature type="binding site" evidence="1">
    <location>
        <position position="20"/>
    </location>
    <ligand>
        <name>[4Fe-4S] cluster</name>
        <dbReference type="ChEBI" id="CHEBI:49883"/>
    </ligand>
</feature>
<feature type="binding site" evidence="1">
    <location>
        <position position="23"/>
    </location>
    <ligand>
        <name>[4Fe-4S] cluster</name>
        <dbReference type="ChEBI" id="CHEBI:49883"/>
    </ligand>
</feature>
<feature type="binding site" evidence="1">
    <location>
        <position position="100"/>
    </location>
    <ligand>
        <name>[4Fe-4S] cluster</name>
        <dbReference type="ChEBI" id="CHEBI:49883"/>
    </ligand>
</feature>
<feature type="binding site" evidence="1">
    <location>
        <position position="225"/>
    </location>
    <ligand>
        <name>S-adenosyl-L-methionine</name>
        <dbReference type="ChEBI" id="CHEBI:59789"/>
    </ligand>
</feature>
<feature type="binding site" evidence="1">
    <location>
        <position position="254"/>
    </location>
    <ligand>
        <name>S-adenosyl-L-methionine</name>
        <dbReference type="ChEBI" id="CHEBI:59789"/>
    </ligand>
</feature>
<feature type="binding site" evidence="1">
    <location>
        <position position="275"/>
    </location>
    <ligand>
        <name>S-adenosyl-L-methionine</name>
        <dbReference type="ChEBI" id="CHEBI:59789"/>
    </ligand>
</feature>
<feature type="binding site" evidence="1">
    <location>
        <position position="322"/>
    </location>
    <ligand>
        <name>S-adenosyl-L-methionine</name>
        <dbReference type="ChEBI" id="CHEBI:59789"/>
    </ligand>
</feature>
<name>RLMC_SHEB2</name>
<accession>B8E5Q5</accession>
<evidence type="ECO:0000255" key="1">
    <source>
        <dbReference type="HAMAP-Rule" id="MF_01012"/>
    </source>
</evidence>
<protein>
    <recommendedName>
        <fullName evidence="1">23S rRNA (uracil(747)-C(5))-methyltransferase RlmC</fullName>
        <ecNumber evidence="1">2.1.1.189</ecNumber>
    </recommendedName>
    <alternativeName>
        <fullName evidence="1">23S rRNA(m5U747)-methyltransferase</fullName>
    </alternativeName>
</protein>
<comment type="function">
    <text evidence="1">Catalyzes the formation of 5-methyl-uridine at position 747 (m5U747) in 23S rRNA.</text>
</comment>
<comment type="catalytic activity">
    <reaction evidence="1">
        <text>uridine(747) in 23S rRNA + S-adenosyl-L-methionine = 5-methyluridine(747) in 23S rRNA + S-adenosyl-L-homocysteine + H(+)</text>
        <dbReference type="Rhea" id="RHEA:42628"/>
        <dbReference type="Rhea" id="RHEA-COMP:10154"/>
        <dbReference type="Rhea" id="RHEA-COMP:10155"/>
        <dbReference type="ChEBI" id="CHEBI:15378"/>
        <dbReference type="ChEBI" id="CHEBI:57856"/>
        <dbReference type="ChEBI" id="CHEBI:59789"/>
        <dbReference type="ChEBI" id="CHEBI:65315"/>
        <dbReference type="ChEBI" id="CHEBI:74447"/>
        <dbReference type="EC" id="2.1.1.189"/>
    </reaction>
</comment>
<comment type="similarity">
    <text evidence="1">Belongs to the class I-like SAM-binding methyltransferase superfamily. RNA M5U methyltransferase family. RlmC subfamily.</text>
</comment>